<feature type="chain" id="PRO_1000093606" description="DNA mismatch repair protein MutS">
    <location>
        <begin position="1"/>
        <end position="882"/>
    </location>
</feature>
<feature type="binding site" evidence="1">
    <location>
        <begin position="627"/>
        <end position="634"/>
    </location>
    <ligand>
        <name>ATP</name>
        <dbReference type="ChEBI" id="CHEBI:30616"/>
    </ligand>
</feature>
<organism>
    <name type="scientific">Anaeromyxobacter sp. (strain K)</name>
    <dbReference type="NCBI Taxonomy" id="447217"/>
    <lineage>
        <taxon>Bacteria</taxon>
        <taxon>Pseudomonadati</taxon>
        <taxon>Myxococcota</taxon>
        <taxon>Myxococcia</taxon>
        <taxon>Myxococcales</taxon>
        <taxon>Cystobacterineae</taxon>
        <taxon>Anaeromyxobacteraceae</taxon>
        <taxon>Anaeromyxobacter</taxon>
    </lineage>
</organism>
<proteinExistence type="inferred from homology"/>
<keyword id="KW-0067">ATP-binding</keyword>
<keyword id="KW-0227">DNA damage</keyword>
<keyword id="KW-0234">DNA repair</keyword>
<keyword id="KW-0238">DNA-binding</keyword>
<keyword id="KW-0547">Nucleotide-binding</keyword>
<evidence type="ECO:0000255" key="1">
    <source>
        <dbReference type="HAMAP-Rule" id="MF_00096"/>
    </source>
</evidence>
<accession>B4UCY7</accession>
<sequence length="882" mass="94953">MPEIAQAHTPMMRQYLETKARYPDAILFFRLGDFYEMFFEDALTASEALQITLTARSKGDDKVPMCGVPYHAARGYVARLLEKGFKVAICDQVEEPGKSQLVKREVTRVVTPGMVLDDQVLDPREASWLGAVALDDGRAGLALLDASTGQLQCGEVDGDERLVDELRRAGVRELVFSSAADGARAEAIARAVGAPAARRDAAEFERAEDRLRKHLGVPSLDGFGVSGLPLGLAAAAAALAYLADTQRAAPRHVDRISRLSTDDVLLLDEATRTNLELERTLSGGRKKGTLLALLDRTVTAPGGRRLAEWLRYPLTDLARIGARLDAVEELTGAAVAREELALALRPVADLERLLSRLVLGQGNARDLRALAGALLALPALAAVLEARGAARLREAGARLRGLEALAAHLDAAVAEEPPATLREGGIIRRGHSAELDEIVAIAEDGKGWIAALEAKERERTGIGSLKVRFNKVFGYYLEVTRPNLHLVPKDWERRQTTVGGERFVTPELKTLEEKVLTAEERRAALEERLFEALRQAVAAEAPRVRTAADAVATADALLSLSRVAAERGYVRPEVDASEALEIVDGRHPVVEAVLPDGPAAYVPNDVLVASRDAPECAEHGALLVITGPNMAGKSTVMREAALVVLLAQMGAFVPARRARIGLVDRIFTRVGASDDLARGRSTFMVEMTETAAILHNATRRSLVVLDEIGRGTSTFDGVSIAWAVAEHLHDVTGCRTLFATHYHELQDLARERPAVRNLTVAVREVGDRVVFLRKLVQGGASRSYGIEVAKLAGLPAEVLARAREILKNLEAMEVDEGGHPALARGRRRRAGPSAAQLGLFGGGAAADPAAEEVAKAIRAIDLDALRPLDALNLLAGWKKSLE</sequence>
<comment type="function">
    <text evidence="1">This protein is involved in the repair of mismatches in DNA. It is possible that it carries out the mismatch recognition step. This protein has a weak ATPase activity.</text>
</comment>
<comment type="similarity">
    <text evidence="1">Belongs to the DNA mismatch repair MutS family.</text>
</comment>
<reference key="1">
    <citation type="submission" date="2008-08" db="EMBL/GenBank/DDBJ databases">
        <title>Complete sequence of Anaeromyxobacter sp. K.</title>
        <authorList>
            <consortium name="US DOE Joint Genome Institute"/>
            <person name="Lucas S."/>
            <person name="Copeland A."/>
            <person name="Lapidus A."/>
            <person name="Glavina del Rio T."/>
            <person name="Dalin E."/>
            <person name="Tice H."/>
            <person name="Bruce D."/>
            <person name="Goodwin L."/>
            <person name="Pitluck S."/>
            <person name="Saunders E."/>
            <person name="Brettin T."/>
            <person name="Detter J.C."/>
            <person name="Han C."/>
            <person name="Larimer F."/>
            <person name="Land M."/>
            <person name="Hauser L."/>
            <person name="Kyrpides N."/>
            <person name="Ovchinnikiva G."/>
            <person name="Beliaev A."/>
        </authorList>
    </citation>
    <scope>NUCLEOTIDE SEQUENCE [LARGE SCALE GENOMIC DNA]</scope>
    <source>
        <strain>K</strain>
    </source>
</reference>
<protein>
    <recommendedName>
        <fullName evidence="1">DNA mismatch repair protein MutS</fullName>
    </recommendedName>
</protein>
<gene>
    <name evidence="1" type="primary">mutS</name>
    <name type="ordered locus">AnaeK_2157</name>
</gene>
<name>MUTS_ANASK</name>
<dbReference type="EMBL" id="CP001131">
    <property type="protein sequence ID" value="ACG73384.1"/>
    <property type="molecule type" value="Genomic_DNA"/>
</dbReference>
<dbReference type="RefSeq" id="WP_012526185.1">
    <property type="nucleotide sequence ID" value="NC_011145.1"/>
</dbReference>
<dbReference type="SMR" id="B4UCY7"/>
<dbReference type="KEGG" id="ank:AnaeK_2157"/>
<dbReference type="HOGENOM" id="CLU_002472_3_1_7"/>
<dbReference type="OrthoDB" id="9802448at2"/>
<dbReference type="Proteomes" id="UP000001871">
    <property type="component" value="Chromosome"/>
</dbReference>
<dbReference type="GO" id="GO:0005829">
    <property type="term" value="C:cytosol"/>
    <property type="evidence" value="ECO:0007669"/>
    <property type="project" value="TreeGrafter"/>
</dbReference>
<dbReference type="GO" id="GO:0005524">
    <property type="term" value="F:ATP binding"/>
    <property type="evidence" value="ECO:0007669"/>
    <property type="project" value="UniProtKB-UniRule"/>
</dbReference>
<dbReference type="GO" id="GO:0140664">
    <property type="term" value="F:ATP-dependent DNA damage sensor activity"/>
    <property type="evidence" value="ECO:0007669"/>
    <property type="project" value="InterPro"/>
</dbReference>
<dbReference type="GO" id="GO:0003684">
    <property type="term" value="F:damaged DNA binding"/>
    <property type="evidence" value="ECO:0007669"/>
    <property type="project" value="UniProtKB-UniRule"/>
</dbReference>
<dbReference type="GO" id="GO:0030983">
    <property type="term" value="F:mismatched DNA binding"/>
    <property type="evidence" value="ECO:0007669"/>
    <property type="project" value="InterPro"/>
</dbReference>
<dbReference type="GO" id="GO:0006298">
    <property type="term" value="P:mismatch repair"/>
    <property type="evidence" value="ECO:0007669"/>
    <property type="project" value="UniProtKB-UniRule"/>
</dbReference>
<dbReference type="CDD" id="cd03284">
    <property type="entry name" value="ABC_MutS1"/>
    <property type="match status" value="1"/>
</dbReference>
<dbReference type="FunFam" id="3.40.1170.10:FF:000001">
    <property type="entry name" value="DNA mismatch repair protein MutS"/>
    <property type="match status" value="1"/>
</dbReference>
<dbReference type="FunFam" id="3.40.50.300:FF:000870">
    <property type="entry name" value="MutS protein homolog 4"/>
    <property type="match status" value="1"/>
</dbReference>
<dbReference type="Gene3D" id="1.10.1420.10">
    <property type="match status" value="2"/>
</dbReference>
<dbReference type="Gene3D" id="3.40.1170.10">
    <property type="entry name" value="DNA repair protein MutS, domain I"/>
    <property type="match status" value="1"/>
</dbReference>
<dbReference type="Gene3D" id="3.30.420.110">
    <property type="entry name" value="MutS, connector domain"/>
    <property type="match status" value="1"/>
</dbReference>
<dbReference type="Gene3D" id="3.40.50.300">
    <property type="entry name" value="P-loop containing nucleotide triphosphate hydrolases"/>
    <property type="match status" value="1"/>
</dbReference>
<dbReference type="HAMAP" id="MF_00096">
    <property type="entry name" value="MutS"/>
    <property type="match status" value="1"/>
</dbReference>
<dbReference type="InterPro" id="IPR005748">
    <property type="entry name" value="DNA_mismatch_repair_MutS"/>
</dbReference>
<dbReference type="InterPro" id="IPR007695">
    <property type="entry name" value="DNA_mismatch_repair_MutS-lik_N"/>
</dbReference>
<dbReference type="InterPro" id="IPR017261">
    <property type="entry name" value="DNA_mismatch_repair_MutS/MSH"/>
</dbReference>
<dbReference type="InterPro" id="IPR000432">
    <property type="entry name" value="DNA_mismatch_repair_MutS_C"/>
</dbReference>
<dbReference type="InterPro" id="IPR007861">
    <property type="entry name" value="DNA_mismatch_repair_MutS_clamp"/>
</dbReference>
<dbReference type="InterPro" id="IPR007696">
    <property type="entry name" value="DNA_mismatch_repair_MutS_core"/>
</dbReference>
<dbReference type="InterPro" id="IPR016151">
    <property type="entry name" value="DNA_mismatch_repair_MutS_N"/>
</dbReference>
<dbReference type="InterPro" id="IPR036187">
    <property type="entry name" value="DNA_mismatch_repair_MutS_sf"/>
</dbReference>
<dbReference type="InterPro" id="IPR007860">
    <property type="entry name" value="DNA_mmatch_repair_MutS_con_dom"/>
</dbReference>
<dbReference type="InterPro" id="IPR045076">
    <property type="entry name" value="MutS"/>
</dbReference>
<dbReference type="InterPro" id="IPR036678">
    <property type="entry name" value="MutS_con_dom_sf"/>
</dbReference>
<dbReference type="InterPro" id="IPR027417">
    <property type="entry name" value="P-loop_NTPase"/>
</dbReference>
<dbReference type="NCBIfam" id="TIGR01070">
    <property type="entry name" value="mutS1"/>
    <property type="match status" value="1"/>
</dbReference>
<dbReference type="NCBIfam" id="NF003810">
    <property type="entry name" value="PRK05399.1"/>
    <property type="match status" value="1"/>
</dbReference>
<dbReference type="PANTHER" id="PTHR11361:SF34">
    <property type="entry name" value="DNA MISMATCH REPAIR PROTEIN MSH1, MITOCHONDRIAL"/>
    <property type="match status" value="1"/>
</dbReference>
<dbReference type="PANTHER" id="PTHR11361">
    <property type="entry name" value="DNA MISMATCH REPAIR PROTEIN MUTS FAMILY MEMBER"/>
    <property type="match status" value="1"/>
</dbReference>
<dbReference type="Pfam" id="PF01624">
    <property type="entry name" value="MutS_I"/>
    <property type="match status" value="1"/>
</dbReference>
<dbReference type="Pfam" id="PF05188">
    <property type="entry name" value="MutS_II"/>
    <property type="match status" value="1"/>
</dbReference>
<dbReference type="Pfam" id="PF05192">
    <property type="entry name" value="MutS_III"/>
    <property type="match status" value="1"/>
</dbReference>
<dbReference type="Pfam" id="PF05190">
    <property type="entry name" value="MutS_IV"/>
    <property type="match status" value="1"/>
</dbReference>
<dbReference type="Pfam" id="PF00488">
    <property type="entry name" value="MutS_V"/>
    <property type="match status" value="1"/>
</dbReference>
<dbReference type="PIRSF" id="PIRSF037677">
    <property type="entry name" value="DNA_mis_repair_Msh6"/>
    <property type="match status" value="1"/>
</dbReference>
<dbReference type="SMART" id="SM00534">
    <property type="entry name" value="MUTSac"/>
    <property type="match status" value="1"/>
</dbReference>
<dbReference type="SMART" id="SM00533">
    <property type="entry name" value="MUTSd"/>
    <property type="match status" value="1"/>
</dbReference>
<dbReference type="SUPFAM" id="SSF55271">
    <property type="entry name" value="DNA repair protein MutS, domain I"/>
    <property type="match status" value="1"/>
</dbReference>
<dbReference type="SUPFAM" id="SSF53150">
    <property type="entry name" value="DNA repair protein MutS, domain II"/>
    <property type="match status" value="1"/>
</dbReference>
<dbReference type="SUPFAM" id="SSF48334">
    <property type="entry name" value="DNA repair protein MutS, domain III"/>
    <property type="match status" value="1"/>
</dbReference>
<dbReference type="SUPFAM" id="SSF52540">
    <property type="entry name" value="P-loop containing nucleoside triphosphate hydrolases"/>
    <property type="match status" value="1"/>
</dbReference>
<dbReference type="PROSITE" id="PS00486">
    <property type="entry name" value="DNA_MISMATCH_REPAIR_2"/>
    <property type="match status" value="1"/>
</dbReference>